<proteinExistence type="inferred from homology"/>
<feature type="chain" id="PRO_0000409033" description="Nuclear rim protein 1">
    <location>
        <begin position="1"/>
        <end position="484"/>
    </location>
</feature>
<feature type="transmembrane region" description="Helical" evidence="3">
    <location>
        <begin position="145"/>
        <end position="165"/>
    </location>
</feature>
<feature type="transmembrane region" description="Helical" evidence="3">
    <location>
        <begin position="237"/>
        <end position="257"/>
    </location>
</feature>
<feature type="region of interest" description="Disordered" evidence="4">
    <location>
        <begin position="416"/>
        <end position="457"/>
    </location>
</feature>
<feature type="compositionally biased region" description="Polar residues" evidence="4">
    <location>
        <begin position="430"/>
        <end position="440"/>
    </location>
</feature>
<feature type="modified residue" description="Phosphoserine" evidence="2">
    <location>
        <position position="3"/>
    </location>
</feature>
<feature type="modified residue" description="Phosphoserine" evidence="2">
    <location>
        <position position="417"/>
    </location>
</feature>
<feature type="modified residue" description="Phosphoserine" evidence="2">
    <location>
        <position position="474"/>
    </location>
</feature>
<evidence type="ECO:0000250" key="1"/>
<evidence type="ECO:0000250" key="2">
    <source>
        <dbReference type="UniProtKB" id="Q12066"/>
    </source>
</evidence>
<evidence type="ECO:0000255" key="3"/>
<evidence type="ECO:0000256" key="4">
    <source>
        <dbReference type="SAM" id="MobiDB-lite"/>
    </source>
</evidence>
<evidence type="ECO:0000305" key="5"/>
<keyword id="KW-0472">Membrane</keyword>
<keyword id="KW-0539">Nucleus</keyword>
<keyword id="KW-0597">Phosphoprotein</keyword>
<keyword id="KW-0812">Transmembrane</keyword>
<keyword id="KW-1133">Transmembrane helix</keyword>
<gene>
    <name type="primary">NUR1</name>
    <name type="ORF">C1Q_00365</name>
</gene>
<sequence length="484" mass="56787">MGSNDLINEAYDDSEVVGEERESKSAWMKRWYQLLTSPLDLQLVINEKLEMINWDAYAKSLAKPLGNFLTILFFIIRLLQDNLIKPNYYKLNVKSGAFDLSKSNKLKEFDYLWEISSSFQNSNQFYAFQSWYFVTLRFLNNLFRFTIFILLSLNLYVSCKFMFGYFKTYNLFHLKKEFNSPNLTKHNLKDLSKEYYEDIYKQSLWSMLKHFFRGSRDDGPHVNQNEVEIFFQLRKWIPTNFIINLFVSFSPTAIVFLSFSDVSFTSAIAIVFHQYILDYIITKRFQRSVDDDLILSSAALQEYEDKHIMARINQCSNIDTLSSAMGTRSKTPRIFTTHSLCGEEIREVYNYEKREFEALPKMTESVPGSRETRIKDYGGISQVSDNQSHPIGFHYSPRMSPYYRDKVLDNNLAQSSSNENLEKGGAFLPNQDQNRPSKSLSPLRKTPLSARQKRFEGSEFNVLNKNDINSILRSPKKKKNYHKR</sequence>
<accession>C7GJM5</accession>
<reference key="1">
    <citation type="journal article" date="2009" name="Genome Res.">
        <title>Genome structure of a Saccharomyces cerevisiae strain widely used in bioethanol production.</title>
        <authorList>
            <person name="Argueso J.L."/>
            <person name="Carazzolle M.F."/>
            <person name="Mieczkowski P.A."/>
            <person name="Duarte F.M."/>
            <person name="Netto O.V.C."/>
            <person name="Missawa S.K."/>
            <person name="Galzerani F."/>
            <person name="Costa G.G.L."/>
            <person name="Vidal R.O."/>
            <person name="Noronha M.F."/>
            <person name="Dominska M."/>
            <person name="Andrietta M.G.S."/>
            <person name="Andrietta S.R."/>
            <person name="Cunha A.F."/>
            <person name="Gomes L.H."/>
            <person name="Tavares F.C.A."/>
            <person name="Alcarde A.R."/>
            <person name="Dietrich F.S."/>
            <person name="McCusker J.H."/>
            <person name="Petes T.D."/>
            <person name="Pereira G.A.G."/>
        </authorList>
    </citation>
    <scope>NUCLEOTIDE SEQUENCE [LARGE SCALE GENOMIC DNA]</scope>
    <source>
        <strain>JAY291</strain>
    </source>
</reference>
<name>NUR1_YEAS2</name>
<protein>
    <recommendedName>
        <fullName>Nuclear rim protein 1</fullName>
    </recommendedName>
</protein>
<organism>
    <name type="scientific">Saccharomyces cerevisiae (strain JAY291)</name>
    <name type="common">Baker's yeast</name>
    <dbReference type="NCBI Taxonomy" id="574961"/>
    <lineage>
        <taxon>Eukaryota</taxon>
        <taxon>Fungi</taxon>
        <taxon>Dikarya</taxon>
        <taxon>Ascomycota</taxon>
        <taxon>Saccharomycotina</taxon>
        <taxon>Saccharomycetes</taxon>
        <taxon>Saccharomycetales</taxon>
        <taxon>Saccharomycetaceae</taxon>
        <taxon>Saccharomyces</taxon>
    </lineage>
</organism>
<comment type="function">
    <text evidence="1">Member of a perinuclear network that controls recombination at multiple loci to maintain genome stability. Required for rDNA repeat stability (By similarity).</text>
</comment>
<comment type="subunit">
    <text evidence="1">Interacts with CSM1.</text>
</comment>
<comment type="subcellular location">
    <subcellularLocation>
        <location evidence="1">Nucleus membrane</location>
        <topology evidence="1">Multi-pass membrane protein</topology>
    </subcellularLocation>
</comment>
<comment type="similarity">
    <text evidence="5">Belongs to the NUR1 family.</text>
</comment>
<dbReference type="EMBL" id="ACFL01000010">
    <property type="protein sequence ID" value="EEU08992.1"/>
    <property type="molecule type" value="Genomic_DNA"/>
</dbReference>
<dbReference type="OrthoDB" id="13877at4893"/>
<dbReference type="Proteomes" id="UP000008073">
    <property type="component" value="Unassembled WGS sequence"/>
</dbReference>
<dbReference type="GO" id="GO:0031965">
    <property type="term" value="C:nuclear membrane"/>
    <property type="evidence" value="ECO:0007669"/>
    <property type="project" value="UniProtKB-SubCell"/>
</dbReference>
<dbReference type="GO" id="GO:0043007">
    <property type="term" value="P:maintenance of rDNA"/>
    <property type="evidence" value="ECO:0007669"/>
    <property type="project" value="TreeGrafter"/>
</dbReference>
<dbReference type="GO" id="GO:0007096">
    <property type="term" value="P:regulation of exit from mitosis"/>
    <property type="evidence" value="ECO:0007669"/>
    <property type="project" value="TreeGrafter"/>
</dbReference>
<dbReference type="InterPro" id="IPR018819">
    <property type="entry name" value="Nur1/Mug154"/>
</dbReference>
<dbReference type="PANTHER" id="PTHR28293">
    <property type="entry name" value="NUCLEAR RIM PROTEIN 1"/>
    <property type="match status" value="1"/>
</dbReference>
<dbReference type="PANTHER" id="PTHR28293:SF1">
    <property type="entry name" value="NUCLEAR RIM PROTEIN 1"/>
    <property type="match status" value="1"/>
</dbReference>
<dbReference type="Pfam" id="PF10332">
    <property type="entry name" value="DUF2418"/>
    <property type="match status" value="1"/>
</dbReference>